<evidence type="ECO:0000255" key="1">
    <source>
        <dbReference type="HAMAP-Rule" id="MF_00184"/>
    </source>
</evidence>
<evidence type="ECO:0000255" key="2">
    <source>
        <dbReference type="PROSITE-ProRule" id="PRU01228"/>
    </source>
</evidence>
<organism>
    <name type="scientific">Chloroherpeton thalassium (strain ATCC 35110 / GB-78)</name>
    <dbReference type="NCBI Taxonomy" id="517418"/>
    <lineage>
        <taxon>Bacteria</taxon>
        <taxon>Pseudomonadati</taxon>
        <taxon>Chlorobiota</taxon>
        <taxon>Chlorobiia</taxon>
        <taxon>Chlorobiales</taxon>
        <taxon>Chloroherpetonaceae</taxon>
        <taxon>Chloroherpeton</taxon>
    </lineage>
</organism>
<sequence>MSETLADSELIKLTLPNGDVRAYPKGVTGSEVAASIGKRLAEDALAIKFGGKLKDLAFPIQQDGAIEIVTFDSDEGKALYWHSSSHLMAQAIEELFPGTKFGAGPSIETGFYYDVASEHRFSEADLREIEARMLEISNRDLQIQREELSREAAIEYFKTRREDPFKVEILEDTLKDTPVVSIYHQGEFSDLCSGPHFSSTSKLKAVRLTSISGSFWRGDASRQQMQRIYGVSFPSEKLLKKHFSQIEEAKKRDHRKLGSELELFMISPEVGSGLPMWLPKGAILRNELESFLKDEQRRRGYLPVVTPHIGNIELYKTSGHYPYYSDSQFPPLTFTDELGKEEQYLLKPMNCPHHHQIYSSKPRSYRDLPIRLTEFGTVYRYEQSGELNGLIRVRGFTQDDSHIYCRQDQLVDEICKAIDLTQFVFKTLGFAEVQTRLSLRDPENTSKYSGNNEVWVQAEQDLKDAADKMQLNYFIGLGEASFYGPKIDFIVRDAIGRKWQLGTVQVDYVMPERFDLTYVGSDGQKHRPVVIHRAPFGSLERFIGILIENFAGNFPVWLSPVQVMVLPITDDFRDYAHSVLQKLLDAGIRAEIDERGEKVGKKIRDAEIKKIPYMFVVGEKEMAAASVAVRRHKEGDKGTMPLQEAIRLLQTDISTKKIS</sequence>
<dbReference type="EC" id="6.1.1.3" evidence="1"/>
<dbReference type="EMBL" id="CP001100">
    <property type="protein sequence ID" value="ACF14448.1"/>
    <property type="molecule type" value="Genomic_DNA"/>
</dbReference>
<dbReference type="RefSeq" id="WP_012500531.1">
    <property type="nucleotide sequence ID" value="NC_011026.1"/>
</dbReference>
<dbReference type="SMR" id="B3QUU7"/>
<dbReference type="STRING" id="517418.Ctha_1994"/>
<dbReference type="KEGG" id="cts:Ctha_1994"/>
<dbReference type="eggNOG" id="COG0441">
    <property type="taxonomic scope" value="Bacteria"/>
</dbReference>
<dbReference type="HOGENOM" id="CLU_008554_0_1_10"/>
<dbReference type="OrthoDB" id="9802304at2"/>
<dbReference type="Proteomes" id="UP000001208">
    <property type="component" value="Chromosome"/>
</dbReference>
<dbReference type="GO" id="GO:0005737">
    <property type="term" value="C:cytoplasm"/>
    <property type="evidence" value="ECO:0007669"/>
    <property type="project" value="UniProtKB-SubCell"/>
</dbReference>
<dbReference type="GO" id="GO:0005524">
    <property type="term" value="F:ATP binding"/>
    <property type="evidence" value="ECO:0007669"/>
    <property type="project" value="UniProtKB-UniRule"/>
</dbReference>
<dbReference type="GO" id="GO:0046872">
    <property type="term" value="F:metal ion binding"/>
    <property type="evidence" value="ECO:0007669"/>
    <property type="project" value="UniProtKB-KW"/>
</dbReference>
<dbReference type="GO" id="GO:0004829">
    <property type="term" value="F:threonine-tRNA ligase activity"/>
    <property type="evidence" value="ECO:0007669"/>
    <property type="project" value="UniProtKB-UniRule"/>
</dbReference>
<dbReference type="GO" id="GO:0000049">
    <property type="term" value="F:tRNA binding"/>
    <property type="evidence" value="ECO:0007669"/>
    <property type="project" value="UniProtKB-KW"/>
</dbReference>
<dbReference type="GO" id="GO:0006435">
    <property type="term" value="P:threonyl-tRNA aminoacylation"/>
    <property type="evidence" value="ECO:0007669"/>
    <property type="project" value="UniProtKB-UniRule"/>
</dbReference>
<dbReference type="CDD" id="cd01667">
    <property type="entry name" value="TGS_ThrRS"/>
    <property type="match status" value="1"/>
</dbReference>
<dbReference type="CDD" id="cd00860">
    <property type="entry name" value="ThrRS_anticodon"/>
    <property type="match status" value="1"/>
</dbReference>
<dbReference type="CDD" id="cd00771">
    <property type="entry name" value="ThrRS_core"/>
    <property type="match status" value="1"/>
</dbReference>
<dbReference type="FunFam" id="3.30.54.20:FF:000002">
    <property type="entry name" value="Threonine--tRNA ligase"/>
    <property type="match status" value="1"/>
</dbReference>
<dbReference type="FunFam" id="3.30.930.10:FF:000002">
    <property type="entry name" value="Threonine--tRNA ligase"/>
    <property type="match status" value="1"/>
</dbReference>
<dbReference type="FunFam" id="3.40.50.800:FF:000001">
    <property type="entry name" value="Threonine--tRNA ligase"/>
    <property type="match status" value="1"/>
</dbReference>
<dbReference type="FunFam" id="3.30.980.10:FF:000005">
    <property type="entry name" value="Threonyl-tRNA synthetase, mitochondrial"/>
    <property type="match status" value="1"/>
</dbReference>
<dbReference type="Gene3D" id="3.10.20.30">
    <property type="match status" value="1"/>
</dbReference>
<dbReference type="Gene3D" id="3.30.54.20">
    <property type="match status" value="1"/>
</dbReference>
<dbReference type="Gene3D" id="3.40.50.800">
    <property type="entry name" value="Anticodon-binding domain"/>
    <property type="match status" value="1"/>
</dbReference>
<dbReference type="Gene3D" id="3.30.930.10">
    <property type="entry name" value="Bira Bifunctional Protein, Domain 2"/>
    <property type="match status" value="1"/>
</dbReference>
<dbReference type="Gene3D" id="3.30.980.10">
    <property type="entry name" value="Threonyl-trna Synthetase, Chain A, domain 2"/>
    <property type="match status" value="1"/>
</dbReference>
<dbReference type="HAMAP" id="MF_00184">
    <property type="entry name" value="Thr_tRNA_synth"/>
    <property type="match status" value="1"/>
</dbReference>
<dbReference type="InterPro" id="IPR002314">
    <property type="entry name" value="aa-tRNA-synt_IIb"/>
</dbReference>
<dbReference type="InterPro" id="IPR006195">
    <property type="entry name" value="aa-tRNA-synth_II"/>
</dbReference>
<dbReference type="InterPro" id="IPR045864">
    <property type="entry name" value="aa-tRNA-synth_II/BPL/LPL"/>
</dbReference>
<dbReference type="InterPro" id="IPR004154">
    <property type="entry name" value="Anticodon-bd"/>
</dbReference>
<dbReference type="InterPro" id="IPR036621">
    <property type="entry name" value="Anticodon-bd_dom_sf"/>
</dbReference>
<dbReference type="InterPro" id="IPR012675">
    <property type="entry name" value="Beta-grasp_dom_sf"/>
</dbReference>
<dbReference type="InterPro" id="IPR004095">
    <property type="entry name" value="TGS"/>
</dbReference>
<dbReference type="InterPro" id="IPR012676">
    <property type="entry name" value="TGS-like"/>
</dbReference>
<dbReference type="InterPro" id="IPR002320">
    <property type="entry name" value="Thr-tRNA-ligase_IIa"/>
</dbReference>
<dbReference type="InterPro" id="IPR018163">
    <property type="entry name" value="Thr/Ala-tRNA-synth_IIc_edit"/>
</dbReference>
<dbReference type="InterPro" id="IPR047246">
    <property type="entry name" value="ThrRS_anticodon"/>
</dbReference>
<dbReference type="InterPro" id="IPR033728">
    <property type="entry name" value="ThrRS_core"/>
</dbReference>
<dbReference type="InterPro" id="IPR012947">
    <property type="entry name" value="tRNA_SAD"/>
</dbReference>
<dbReference type="NCBIfam" id="TIGR00418">
    <property type="entry name" value="thrS"/>
    <property type="match status" value="1"/>
</dbReference>
<dbReference type="PANTHER" id="PTHR11451:SF44">
    <property type="entry name" value="THREONINE--TRNA LIGASE, CHLOROPLASTIC_MITOCHONDRIAL 2"/>
    <property type="match status" value="1"/>
</dbReference>
<dbReference type="PANTHER" id="PTHR11451">
    <property type="entry name" value="THREONINE-TRNA LIGASE"/>
    <property type="match status" value="1"/>
</dbReference>
<dbReference type="Pfam" id="PF03129">
    <property type="entry name" value="HGTP_anticodon"/>
    <property type="match status" value="1"/>
</dbReference>
<dbReference type="Pfam" id="PF02824">
    <property type="entry name" value="TGS"/>
    <property type="match status" value="1"/>
</dbReference>
<dbReference type="Pfam" id="PF00587">
    <property type="entry name" value="tRNA-synt_2b"/>
    <property type="match status" value="1"/>
</dbReference>
<dbReference type="Pfam" id="PF07973">
    <property type="entry name" value="tRNA_SAD"/>
    <property type="match status" value="1"/>
</dbReference>
<dbReference type="PRINTS" id="PR01047">
    <property type="entry name" value="TRNASYNTHTHR"/>
</dbReference>
<dbReference type="SMART" id="SM00863">
    <property type="entry name" value="tRNA_SAD"/>
    <property type="match status" value="1"/>
</dbReference>
<dbReference type="SUPFAM" id="SSF52954">
    <property type="entry name" value="Class II aaRS ABD-related"/>
    <property type="match status" value="1"/>
</dbReference>
<dbReference type="SUPFAM" id="SSF55681">
    <property type="entry name" value="Class II aaRS and biotin synthetases"/>
    <property type="match status" value="1"/>
</dbReference>
<dbReference type="SUPFAM" id="SSF81271">
    <property type="entry name" value="TGS-like"/>
    <property type="match status" value="1"/>
</dbReference>
<dbReference type="SUPFAM" id="SSF55186">
    <property type="entry name" value="ThrRS/AlaRS common domain"/>
    <property type="match status" value="1"/>
</dbReference>
<dbReference type="PROSITE" id="PS50862">
    <property type="entry name" value="AA_TRNA_LIGASE_II"/>
    <property type="match status" value="1"/>
</dbReference>
<dbReference type="PROSITE" id="PS51880">
    <property type="entry name" value="TGS"/>
    <property type="match status" value="1"/>
</dbReference>
<feature type="chain" id="PRO_1000098558" description="Threonine--tRNA ligase">
    <location>
        <begin position="1"/>
        <end position="659"/>
    </location>
</feature>
<feature type="domain" description="TGS" evidence="2">
    <location>
        <begin position="7"/>
        <end position="70"/>
    </location>
</feature>
<feature type="region of interest" description="Catalytic" evidence="1">
    <location>
        <begin position="253"/>
        <end position="555"/>
    </location>
</feature>
<feature type="binding site" evidence="1">
    <location>
        <position position="351"/>
    </location>
    <ligand>
        <name>Zn(2+)</name>
        <dbReference type="ChEBI" id="CHEBI:29105"/>
    </ligand>
</feature>
<feature type="binding site" evidence="1">
    <location>
        <position position="402"/>
    </location>
    <ligand>
        <name>Zn(2+)</name>
        <dbReference type="ChEBI" id="CHEBI:29105"/>
    </ligand>
</feature>
<feature type="binding site" evidence="1">
    <location>
        <position position="532"/>
    </location>
    <ligand>
        <name>Zn(2+)</name>
        <dbReference type="ChEBI" id="CHEBI:29105"/>
    </ligand>
</feature>
<comment type="function">
    <text evidence="1">Catalyzes the attachment of threonine to tRNA(Thr) in a two-step reaction: L-threonine is first activated by ATP to form Thr-AMP and then transferred to the acceptor end of tRNA(Thr). Also edits incorrectly charged L-seryl-tRNA(Thr).</text>
</comment>
<comment type="catalytic activity">
    <reaction evidence="1">
        <text>tRNA(Thr) + L-threonine + ATP = L-threonyl-tRNA(Thr) + AMP + diphosphate + H(+)</text>
        <dbReference type="Rhea" id="RHEA:24624"/>
        <dbReference type="Rhea" id="RHEA-COMP:9670"/>
        <dbReference type="Rhea" id="RHEA-COMP:9704"/>
        <dbReference type="ChEBI" id="CHEBI:15378"/>
        <dbReference type="ChEBI" id="CHEBI:30616"/>
        <dbReference type="ChEBI" id="CHEBI:33019"/>
        <dbReference type="ChEBI" id="CHEBI:57926"/>
        <dbReference type="ChEBI" id="CHEBI:78442"/>
        <dbReference type="ChEBI" id="CHEBI:78534"/>
        <dbReference type="ChEBI" id="CHEBI:456215"/>
        <dbReference type="EC" id="6.1.1.3"/>
    </reaction>
</comment>
<comment type="cofactor">
    <cofactor evidence="1">
        <name>Zn(2+)</name>
        <dbReference type="ChEBI" id="CHEBI:29105"/>
    </cofactor>
    <text evidence="1">Binds 1 zinc ion per subunit.</text>
</comment>
<comment type="subunit">
    <text evidence="1">Homodimer.</text>
</comment>
<comment type="subcellular location">
    <subcellularLocation>
        <location evidence="1">Cytoplasm</location>
    </subcellularLocation>
</comment>
<comment type="similarity">
    <text evidence="1">Belongs to the class-II aminoacyl-tRNA synthetase family.</text>
</comment>
<gene>
    <name evidence="1" type="primary">thrS</name>
    <name type="ordered locus">Ctha_1994</name>
</gene>
<reference key="1">
    <citation type="submission" date="2008-06" db="EMBL/GenBank/DDBJ databases">
        <title>Complete sequence of Chloroherpeton thalassium ATCC 35110.</title>
        <authorList>
            <consortium name="US DOE Joint Genome Institute"/>
            <person name="Lucas S."/>
            <person name="Copeland A."/>
            <person name="Lapidus A."/>
            <person name="Glavina del Rio T."/>
            <person name="Dalin E."/>
            <person name="Tice H."/>
            <person name="Bruce D."/>
            <person name="Goodwin L."/>
            <person name="Pitluck S."/>
            <person name="Schmutz J."/>
            <person name="Larimer F."/>
            <person name="Land M."/>
            <person name="Hauser L."/>
            <person name="Kyrpides N."/>
            <person name="Mikhailova N."/>
            <person name="Liu Z."/>
            <person name="Li T."/>
            <person name="Zhao F."/>
            <person name="Overmann J."/>
            <person name="Bryant D.A."/>
            <person name="Richardson P."/>
        </authorList>
    </citation>
    <scope>NUCLEOTIDE SEQUENCE [LARGE SCALE GENOMIC DNA]</scope>
    <source>
        <strain>ATCC 35110 / GB-78</strain>
    </source>
</reference>
<proteinExistence type="inferred from homology"/>
<accession>B3QUU7</accession>
<name>SYT_CHLT3</name>
<keyword id="KW-0030">Aminoacyl-tRNA synthetase</keyword>
<keyword id="KW-0067">ATP-binding</keyword>
<keyword id="KW-0963">Cytoplasm</keyword>
<keyword id="KW-0436">Ligase</keyword>
<keyword id="KW-0479">Metal-binding</keyword>
<keyword id="KW-0547">Nucleotide-binding</keyword>
<keyword id="KW-0648">Protein biosynthesis</keyword>
<keyword id="KW-1185">Reference proteome</keyword>
<keyword id="KW-0694">RNA-binding</keyword>
<keyword id="KW-0820">tRNA-binding</keyword>
<keyword id="KW-0862">Zinc</keyword>
<protein>
    <recommendedName>
        <fullName evidence="1">Threonine--tRNA ligase</fullName>
        <ecNumber evidence="1">6.1.1.3</ecNumber>
    </recommendedName>
    <alternativeName>
        <fullName evidence="1">Threonyl-tRNA synthetase</fullName>
        <shortName evidence="1">ThrRS</shortName>
    </alternativeName>
</protein>